<protein>
    <recommendedName>
        <fullName evidence="1">Octanoyltransferase LipM</fullName>
        <ecNumber evidence="1">2.3.1.181</ecNumber>
    </recommendedName>
    <alternativeName>
        <fullName evidence="1">Octanoyl-[acyl-carrier-protein]:[GcvH] N-octanoyltransferase</fullName>
    </alternativeName>
</protein>
<organism>
    <name type="scientific">Staphylococcus epidermidis (strain ATCC 35984 / DSM 28319 / BCRC 17069 / CCUG 31568 / BM 3577 / RP62A)</name>
    <dbReference type="NCBI Taxonomy" id="176279"/>
    <lineage>
        <taxon>Bacteria</taxon>
        <taxon>Bacillati</taxon>
        <taxon>Bacillota</taxon>
        <taxon>Bacilli</taxon>
        <taxon>Bacillales</taxon>
        <taxon>Staphylococcaceae</taxon>
        <taxon>Staphylococcus</taxon>
    </lineage>
</organism>
<accession>Q5HP16</accession>
<sequence length="276" mass="32014">MTEIWNFINTGSKNPYYNMAMDEALLNFVSRGEIDPVIRFYTWNPATLSIGYFQRLQKEIDIDKVKEKGYGLVRRQTGGRGVLHDKELTYSVIVPESHPNMPSTVTEAYKIISQGLLEGFKNLGFETYFAIPRSKEERDKLKQPRSSVCFDAPSWYELVVEGRKIAGSAQTRQKGVILQHGSILQDIDIDDLFDMFKFKNERLKAKMKENFVQKAVAINDISNQHITLNEMENAFEAGFKKGLNIDFKPLELTEKQLEEVQELEDKYRSEAWMYRK</sequence>
<name>LIPM_STAEQ</name>
<evidence type="ECO:0000255" key="1">
    <source>
        <dbReference type="HAMAP-Rule" id="MF_02118"/>
    </source>
</evidence>
<evidence type="ECO:0000255" key="2">
    <source>
        <dbReference type="PROSITE-ProRule" id="PRU01067"/>
    </source>
</evidence>
<comment type="function">
    <text evidence="1">Catalyzes the transfer of endogenously produced octanoic acid from octanoyl-acyl-carrier-protein onto the lipoyl domain of GcvH, an intermediate carrier during protein lipoylation.</text>
</comment>
<comment type="catalytic activity">
    <reaction evidence="1">
        <text>octanoyl-[ACP] + L-lysyl-[protein] = N(6)-octanoyl-L-lysyl-[protein] + holo-[ACP] + H(+)</text>
        <dbReference type="Rhea" id="RHEA:17665"/>
        <dbReference type="Rhea" id="RHEA-COMP:9636"/>
        <dbReference type="Rhea" id="RHEA-COMP:9685"/>
        <dbReference type="Rhea" id="RHEA-COMP:9752"/>
        <dbReference type="Rhea" id="RHEA-COMP:9928"/>
        <dbReference type="ChEBI" id="CHEBI:15378"/>
        <dbReference type="ChEBI" id="CHEBI:29969"/>
        <dbReference type="ChEBI" id="CHEBI:64479"/>
        <dbReference type="ChEBI" id="CHEBI:78463"/>
        <dbReference type="ChEBI" id="CHEBI:78809"/>
        <dbReference type="EC" id="2.3.1.181"/>
    </reaction>
</comment>
<comment type="pathway">
    <text evidence="1">Protein modification; protein lipoylation via endogenous pathway; protein N(6)-(lipoyl)lysine from octanoyl-[acyl-carrier-protein].</text>
</comment>
<comment type="subunit">
    <text evidence="1">Monomer.</text>
</comment>
<comment type="miscellaneous">
    <text evidence="1">In the reaction, the free carboxyl group of octanoic acid is attached via an amide linkage to the epsilon-amino group of a specific lysine residue of lipoyl domains of lipoate-dependent enzymes. The reaction proceeds via an octanoyl-thioester enzyme intermediate.</text>
</comment>
<comment type="similarity">
    <text evidence="1">Belongs to the octanoyltransferase LipM family.</text>
</comment>
<dbReference type="EC" id="2.3.1.181" evidence="1"/>
<dbReference type="EMBL" id="CP000029">
    <property type="protein sequence ID" value="AAW54489.1"/>
    <property type="molecule type" value="Genomic_DNA"/>
</dbReference>
<dbReference type="RefSeq" id="WP_001830993.1">
    <property type="nucleotide sequence ID" value="NC_002976.3"/>
</dbReference>
<dbReference type="SMR" id="Q5HP16"/>
<dbReference type="STRING" id="176279.SERP1097"/>
<dbReference type="KEGG" id="ser:SERP1097"/>
<dbReference type="eggNOG" id="COG0095">
    <property type="taxonomic scope" value="Bacteria"/>
</dbReference>
<dbReference type="HOGENOM" id="CLU_022986_5_0_9"/>
<dbReference type="Proteomes" id="UP000000531">
    <property type="component" value="Chromosome"/>
</dbReference>
<dbReference type="GO" id="GO:0033819">
    <property type="term" value="F:lipoyl(octanoyl) transferase activity"/>
    <property type="evidence" value="ECO:0007669"/>
    <property type="project" value="UniProtKB-UniRule"/>
</dbReference>
<dbReference type="GO" id="GO:0009107">
    <property type="term" value="P:lipoate biosynthetic process"/>
    <property type="evidence" value="ECO:0007669"/>
    <property type="project" value="UniProtKB-UniRule"/>
</dbReference>
<dbReference type="GO" id="GO:0036211">
    <property type="term" value="P:protein modification process"/>
    <property type="evidence" value="ECO:0007669"/>
    <property type="project" value="InterPro"/>
</dbReference>
<dbReference type="CDD" id="cd16443">
    <property type="entry name" value="LplA"/>
    <property type="match status" value="1"/>
</dbReference>
<dbReference type="Gene3D" id="3.30.930.10">
    <property type="entry name" value="Bira Bifunctional Protein, Domain 2"/>
    <property type="match status" value="1"/>
</dbReference>
<dbReference type="HAMAP" id="MF_02118">
    <property type="entry name" value="LipM"/>
    <property type="match status" value="1"/>
</dbReference>
<dbReference type="InterPro" id="IPR045864">
    <property type="entry name" value="aa-tRNA-synth_II/BPL/LPL"/>
</dbReference>
<dbReference type="InterPro" id="IPR004143">
    <property type="entry name" value="BPL_LPL_catalytic"/>
</dbReference>
<dbReference type="InterPro" id="IPR024898">
    <property type="entry name" value="LipM"/>
</dbReference>
<dbReference type="InterPro" id="IPR050664">
    <property type="entry name" value="Octanoyltrans_LipM/LipL"/>
</dbReference>
<dbReference type="PANTHER" id="PTHR43679:SF2">
    <property type="entry name" value="OCTANOYL-[GCVH]:PROTEIN N-OCTANOYLTRANSFERASE"/>
    <property type="match status" value="1"/>
</dbReference>
<dbReference type="PANTHER" id="PTHR43679">
    <property type="entry name" value="OCTANOYLTRANSFERASE LIPM-RELATED"/>
    <property type="match status" value="1"/>
</dbReference>
<dbReference type="Pfam" id="PF21948">
    <property type="entry name" value="LplA-B_cat"/>
    <property type="match status" value="1"/>
</dbReference>
<dbReference type="SUPFAM" id="SSF55681">
    <property type="entry name" value="Class II aaRS and biotin synthetases"/>
    <property type="match status" value="1"/>
</dbReference>
<dbReference type="PROSITE" id="PS51733">
    <property type="entry name" value="BPL_LPL_CATALYTIC"/>
    <property type="match status" value="1"/>
</dbReference>
<gene>
    <name evidence="1" type="primary">lipM</name>
    <name type="ordered locus">SERP1097</name>
</gene>
<feature type="chain" id="PRO_0000410864" description="Octanoyltransferase LipM">
    <location>
        <begin position="1"/>
        <end position="276"/>
    </location>
</feature>
<feature type="domain" description="BPL/LPL catalytic" evidence="2">
    <location>
        <begin position="32"/>
        <end position="247"/>
    </location>
</feature>
<feature type="active site" description="Acyl-thioester intermediate" evidence="1">
    <location>
        <position position="149"/>
    </location>
</feature>
<feature type="site" description="Lowers pKa of active site Cys" evidence="1">
    <location>
        <position position="164"/>
    </location>
</feature>
<keyword id="KW-0012">Acyltransferase</keyword>
<keyword id="KW-1185">Reference proteome</keyword>
<keyword id="KW-0808">Transferase</keyword>
<proteinExistence type="inferred from homology"/>
<reference key="1">
    <citation type="journal article" date="2005" name="J. Bacteriol.">
        <title>Insights on evolution of virulence and resistance from the complete genome analysis of an early methicillin-resistant Staphylococcus aureus strain and a biofilm-producing methicillin-resistant Staphylococcus epidermidis strain.</title>
        <authorList>
            <person name="Gill S.R."/>
            <person name="Fouts D.E."/>
            <person name="Archer G.L."/>
            <person name="Mongodin E.F."/>
            <person name="DeBoy R.T."/>
            <person name="Ravel J."/>
            <person name="Paulsen I.T."/>
            <person name="Kolonay J.F."/>
            <person name="Brinkac L.M."/>
            <person name="Beanan M.J."/>
            <person name="Dodson R.J."/>
            <person name="Daugherty S.C."/>
            <person name="Madupu R."/>
            <person name="Angiuoli S.V."/>
            <person name="Durkin A.S."/>
            <person name="Haft D.H."/>
            <person name="Vamathevan J.J."/>
            <person name="Khouri H."/>
            <person name="Utterback T.R."/>
            <person name="Lee C."/>
            <person name="Dimitrov G."/>
            <person name="Jiang L."/>
            <person name="Qin H."/>
            <person name="Weidman J."/>
            <person name="Tran K."/>
            <person name="Kang K.H."/>
            <person name="Hance I.R."/>
            <person name="Nelson K.E."/>
            <person name="Fraser C.M."/>
        </authorList>
    </citation>
    <scope>NUCLEOTIDE SEQUENCE [LARGE SCALE GENOMIC DNA]</scope>
    <source>
        <strain>ATCC 35984 / DSM 28319 / BCRC 17069 / CCUG 31568 / BM 3577 / RP62A</strain>
    </source>
</reference>